<evidence type="ECO:0000255" key="1">
    <source>
        <dbReference type="HAMAP-Rule" id="MF_00652"/>
    </source>
</evidence>
<evidence type="ECO:0000305" key="2"/>
<protein>
    <recommendedName>
        <fullName evidence="1">UPF0246 protein VV0659</fullName>
    </recommendedName>
</protein>
<comment type="similarity">
    <text evidence="1">Belongs to the UPF0246 family.</text>
</comment>
<comment type="sequence caution" evidence="2">
    <conflict type="erroneous initiation">
        <sequence resource="EMBL-CDS" id="BAC93423"/>
    </conflict>
</comment>
<gene>
    <name type="ordered locus">VV0659</name>
</gene>
<proteinExistence type="inferred from homology"/>
<accession>Q7MNQ6</accession>
<dbReference type="EMBL" id="BA000037">
    <property type="protein sequence ID" value="BAC93423.1"/>
    <property type="status" value="ALT_INIT"/>
    <property type="molecule type" value="Genomic_DNA"/>
</dbReference>
<dbReference type="SMR" id="Q7MNQ6"/>
<dbReference type="STRING" id="672.VV93_v1c05990"/>
<dbReference type="KEGG" id="vvy:VV0659"/>
<dbReference type="PATRIC" id="fig|196600.6.peg.678"/>
<dbReference type="eggNOG" id="COG3022">
    <property type="taxonomic scope" value="Bacteria"/>
</dbReference>
<dbReference type="HOGENOM" id="CLU_061989_0_0_6"/>
<dbReference type="Proteomes" id="UP000002675">
    <property type="component" value="Chromosome I"/>
</dbReference>
<dbReference type="GO" id="GO:0005829">
    <property type="term" value="C:cytosol"/>
    <property type="evidence" value="ECO:0007669"/>
    <property type="project" value="TreeGrafter"/>
</dbReference>
<dbReference type="GO" id="GO:0033194">
    <property type="term" value="P:response to hydroperoxide"/>
    <property type="evidence" value="ECO:0007669"/>
    <property type="project" value="TreeGrafter"/>
</dbReference>
<dbReference type="HAMAP" id="MF_00652">
    <property type="entry name" value="UPF0246"/>
    <property type="match status" value="1"/>
</dbReference>
<dbReference type="InterPro" id="IPR005583">
    <property type="entry name" value="YaaA"/>
</dbReference>
<dbReference type="NCBIfam" id="NF002541">
    <property type="entry name" value="PRK02101.1-1"/>
    <property type="match status" value="1"/>
</dbReference>
<dbReference type="NCBIfam" id="NF002542">
    <property type="entry name" value="PRK02101.1-3"/>
    <property type="match status" value="1"/>
</dbReference>
<dbReference type="PANTHER" id="PTHR30283:SF4">
    <property type="entry name" value="PEROXIDE STRESS RESISTANCE PROTEIN YAAA"/>
    <property type="match status" value="1"/>
</dbReference>
<dbReference type="PANTHER" id="PTHR30283">
    <property type="entry name" value="PEROXIDE STRESS RESPONSE PROTEIN YAAA"/>
    <property type="match status" value="1"/>
</dbReference>
<dbReference type="Pfam" id="PF03883">
    <property type="entry name" value="H2O2_YaaD"/>
    <property type="match status" value="1"/>
</dbReference>
<name>Y659_VIBVY</name>
<sequence length="258" mass="29241">MLIVVSPAKTLDYESPLVTHKFTQPELVDYSKQLIEVCRQLTPADVASLMKVSDKIADLNVGRFQEWSEEFTPDNARQAILAFKGDVYTGLEAETLNDDDFDYAQKHLRMLSGLYGLLKPLDLMQPYRLEMGTKLANPKGSNLYQFWGNVITEKLNEAIAAQGDNVLINLASNEYFKAVKPKALDAQVITPIFKDAKNGQYKVISFFAKKARGMMARYIIENRISSVADLTQFDSAGYYFVEEESTPTELVFKREEQH</sequence>
<reference key="1">
    <citation type="journal article" date="2003" name="Genome Res.">
        <title>Comparative genome analysis of Vibrio vulnificus, a marine pathogen.</title>
        <authorList>
            <person name="Chen C.-Y."/>
            <person name="Wu K.-M."/>
            <person name="Chang Y.-C."/>
            <person name="Chang C.-H."/>
            <person name="Tsai H.-C."/>
            <person name="Liao T.-L."/>
            <person name="Liu Y.-M."/>
            <person name="Chen H.-J."/>
            <person name="Shen A.B.-T."/>
            <person name="Li J.-C."/>
            <person name="Su T.-L."/>
            <person name="Shao C.-P."/>
            <person name="Lee C.-T."/>
            <person name="Hor L.-I."/>
            <person name="Tsai S.-F."/>
        </authorList>
    </citation>
    <scope>NUCLEOTIDE SEQUENCE [LARGE SCALE GENOMIC DNA]</scope>
    <source>
        <strain>YJ016</strain>
    </source>
</reference>
<feature type="chain" id="PRO_0000204018" description="UPF0246 protein VV0659">
    <location>
        <begin position="1"/>
        <end position="258"/>
    </location>
</feature>
<organism>
    <name type="scientific">Vibrio vulnificus (strain YJ016)</name>
    <dbReference type="NCBI Taxonomy" id="196600"/>
    <lineage>
        <taxon>Bacteria</taxon>
        <taxon>Pseudomonadati</taxon>
        <taxon>Pseudomonadota</taxon>
        <taxon>Gammaproteobacteria</taxon>
        <taxon>Vibrionales</taxon>
        <taxon>Vibrionaceae</taxon>
        <taxon>Vibrio</taxon>
    </lineage>
</organism>